<organism>
    <name type="scientific">Rattus norvegicus</name>
    <name type="common">Rat</name>
    <dbReference type="NCBI Taxonomy" id="10116"/>
    <lineage>
        <taxon>Eukaryota</taxon>
        <taxon>Metazoa</taxon>
        <taxon>Chordata</taxon>
        <taxon>Craniata</taxon>
        <taxon>Vertebrata</taxon>
        <taxon>Euteleostomi</taxon>
        <taxon>Mammalia</taxon>
        <taxon>Eutheria</taxon>
        <taxon>Euarchontoglires</taxon>
        <taxon>Glires</taxon>
        <taxon>Rodentia</taxon>
        <taxon>Myomorpha</taxon>
        <taxon>Muroidea</taxon>
        <taxon>Muridae</taxon>
        <taxon>Murinae</taxon>
        <taxon>Rattus</taxon>
    </lineage>
</organism>
<gene>
    <name type="primary">Slc35g3</name>
    <name type="synonym">Amac1</name>
</gene>
<feature type="chain" id="PRO_0000342674" description="Solute carrier family 35 member G3">
    <location>
        <begin position="1"/>
        <end position="340"/>
    </location>
</feature>
<feature type="transmembrane region" description="Helical" evidence="1">
    <location>
        <begin position="39"/>
        <end position="59"/>
    </location>
</feature>
<feature type="transmembrane region" description="Helical" evidence="1">
    <location>
        <begin position="69"/>
        <end position="89"/>
    </location>
</feature>
<feature type="transmembrane region" description="Helical" evidence="1">
    <location>
        <begin position="107"/>
        <end position="127"/>
    </location>
</feature>
<feature type="transmembrane region" description="Helical" evidence="1">
    <location>
        <begin position="160"/>
        <end position="180"/>
    </location>
</feature>
<feature type="transmembrane region" description="Helical" evidence="1">
    <location>
        <begin position="189"/>
        <end position="209"/>
    </location>
</feature>
<feature type="transmembrane region" description="Helical" evidence="1">
    <location>
        <begin position="223"/>
        <end position="243"/>
    </location>
</feature>
<feature type="transmembrane region" description="Helical" evidence="1">
    <location>
        <begin position="257"/>
        <end position="277"/>
    </location>
</feature>
<feature type="transmembrane region" description="Helical" evidence="1">
    <location>
        <begin position="283"/>
        <end position="303"/>
    </location>
</feature>
<feature type="transmembrane region" description="Helical" evidence="1">
    <location>
        <begin position="307"/>
        <end position="327"/>
    </location>
</feature>
<feature type="domain" description="EamA 1">
    <location>
        <begin position="51"/>
        <end position="176"/>
    </location>
</feature>
<feature type="domain" description="EamA 2">
    <location>
        <begin position="223"/>
        <end position="327"/>
    </location>
</feature>
<feature type="region of interest" description="Disordered" evidence="2">
    <location>
        <begin position="11"/>
        <end position="31"/>
    </location>
</feature>
<evidence type="ECO:0000255" key="1"/>
<evidence type="ECO:0000256" key="2">
    <source>
        <dbReference type="SAM" id="MobiDB-lite"/>
    </source>
</evidence>
<evidence type="ECO:0000305" key="3"/>
<dbReference type="EMBL" id="BC159402">
    <property type="protein sequence ID" value="AAI59403.1"/>
    <property type="molecule type" value="mRNA"/>
</dbReference>
<dbReference type="RefSeq" id="NP_001121130.1">
    <property type="nucleotide sequence ID" value="NM_001127658.1"/>
</dbReference>
<dbReference type="SMR" id="B0K004"/>
<dbReference type="STRING" id="10116.ENSRNOP00000019674"/>
<dbReference type="GlyGen" id="B0K004">
    <property type="glycosylation" value="2 sites"/>
</dbReference>
<dbReference type="PaxDb" id="10116-ENSRNOP00000019674"/>
<dbReference type="GeneID" id="691976"/>
<dbReference type="KEGG" id="rno:691976"/>
<dbReference type="UCSC" id="RGD:1308025">
    <property type="organism name" value="rat"/>
</dbReference>
<dbReference type="AGR" id="RGD:1308025"/>
<dbReference type="CTD" id="146861"/>
<dbReference type="RGD" id="1308025">
    <property type="gene designation" value="Slc35g3"/>
</dbReference>
<dbReference type="VEuPathDB" id="HostDB:ENSRNOG00000014519"/>
<dbReference type="eggNOG" id="ENOG502RCFC">
    <property type="taxonomic scope" value="Eukaryota"/>
</dbReference>
<dbReference type="HOGENOM" id="CLU_055637_0_0_1"/>
<dbReference type="InParanoid" id="B0K004"/>
<dbReference type="OrthoDB" id="306876at2759"/>
<dbReference type="PhylomeDB" id="B0K004"/>
<dbReference type="PRO" id="PR:B0K004"/>
<dbReference type="Proteomes" id="UP000002494">
    <property type="component" value="Chromosome 10"/>
</dbReference>
<dbReference type="Bgee" id="ENSRNOG00000014519">
    <property type="expression patterns" value="Expressed in testis and 16 other cell types or tissues"/>
</dbReference>
<dbReference type="GO" id="GO:0016020">
    <property type="term" value="C:membrane"/>
    <property type="evidence" value="ECO:0000318"/>
    <property type="project" value="GO_Central"/>
</dbReference>
<dbReference type="InterPro" id="IPR000620">
    <property type="entry name" value="EamA_dom"/>
</dbReference>
<dbReference type="PANTHER" id="PTHR22911">
    <property type="entry name" value="ACYL-MALONYL CONDENSING ENZYME-RELATED"/>
    <property type="match status" value="1"/>
</dbReference>
<dbReference type="PANTHER" id="PTHR22911:SF32">
    <property type="entry name" value="SOLUTE CARRIER FAMILY 35 MEMBER G5-RELATED"/>
    <property type="match status" value="1"/>
</dbReference>
<dbReference type="Pfam" id="PF00892">
    <property type="entry name" value="EamA"/>
    <property type="match status" value="2"/>
</dbReference>
<dbReference type="SUPFAM" id="SSF103481">
    <property type="entry name" value="Multidrug resistance efflux transporter EmrE"/>
    <property type="match status" value="2"/>
</dbReference>
<reference key="1">
    <citation type="journal article" date="2004" name="Genome Res.">
        <title>The status, quality, and expansion of the NIH full-length cDNA project: the Mammalian Gene Collection (MGC).</title>
        <authorList>
            <consortium name="The MGC Project Team"/>
        </authorList>
    </citation>
    <scope>NUCLEOTIDE SEQUENCE [LARGE SCALE MRNA]</scope>
    <source>
        <tissue>Testis</tissue>
    </source>
</reference>
<name>S35G3_RAT</name>
<accession>B0K004</accession>
<sequence>MAASHPYFNLPDFTQPSPPSTPSSLTSNHHNRCGPSNATKGLFVALLGGGLSAGFVGPFSRMAYQTSQLPSLELLIFRCLFHLPIALILKFRGDPLLGPPDVRVRAFLHAILNVLSIGCAYSAVQVVPAGNAVTVRKGSSTVCSALLALCLESQRLSGYAWCGLFGSTLGLIIIVGPGLGTLQEGTTGLYTALGYVLAFLGGLALSLGLQVYRSLHFPSCLPTVAFLFGLVGLIVSVPGLFVLQTPVLPQDTLSWSCMVAVGLLALVSFVCVSYAVTKAHPALVCAVLHSEVVVALMLQYYVLYETVAPSDIMGAGVVLGSIAIITAQNFSCDKEGQVEE</sequence>
<proteinExistence type="evidence at transcript level"/>
<keyword id="KW-0472">Membrane</keyword>
<keyword id="KW-1185">Reference proteome</keyword>
<keyword id="KW-0677">Repeat</keyword>
<keyword id="KW-0812">Transmembrane</keyword>
<keyword id="KW-1133">Transmembrane helix</keyword>
<comment type="subcellular location">
    <subcellularLocation>
        <location evidence="3">Membrane</location>
        <topology evidence="3">Multi-pass membrane protein</topology>
    </subcellularLocation>
</comment>
<comment type="similarity">
    <text evidence="3">Belongs to the SLC35G solute transporter family.</text>
</comment>
<protein>
    <recommendedName>
        <fullName>Solute carrier family 35 member G3</fullName>
    </recommendedName>
    <alternativeName>
        <fullName>Acyl-malonyl-condensing enzyme 1</fullName>
    </alternativeName>
</protein>